<accession>P35312</accession>
<protein>
    <recommendedName>
        <fullName>Protamine-2</fullName>
    </recommendedName>
    <alternativeName>
        <fullName>Sperm histone P2</fullName>
    </alternativeName>
    <alternativeName>
        <fullName>Sperm protamine P2</fullName>
    </alternativeName>
</protein>
<feature type="chain" id="PRO_0000191593" description="Protamine-2">
    <location>
        <begin position="1"/>
        <end position="100"/>
    </location>
</feature>
<feature type="region of interest" description="Disordered" evidence="3">
    <location>
        <begin position="1"/>
        <end position="45"/>
    </location>
</feature>
<feature type="compositionally biased region" description="Basic and acidic residues" evidence="3">
    <location>
        <begin position="8"/>
        <end position="18"/>
    </location>
</feature>
<feature type="modified residue" description="Phosphoserine" evidence="2">
    <location>
        <position position="8"/>
    </location>
</feature>
<feature type="modified residue" description="Phosphoserine" evidence="2">
    <location>
        <position position="10"/>
    </location>
</feature>
<feature type="modified residue" description="Phosphoserine" evidence="2">
    <location>
        <position position="37"/>
    </location>
</feature>
<organism>
    <name type="scientific">Alouatta seniculus</name>
    <name type="common">Red howler monkey</name>
    <dbReference type="NCBI Taxonomy" id="9503"/>
    <lineage>
        <taxon>Eukaryota</taxon>
        <taxon>Metazoa</taxon>
        <taxon>Chordata</taxon>
        <taxon>Craniata</taxon>
        <taxon>Vertebrata</taxon>
        <taxon>Euteleostomi</taxon>
        <taxon>Mammalia</taxon>
        <taxon>Eutheria</taxon>
        <taxon>Euarchontoglires</taxon>
        <taxon>Primates</taxon>
        <taxon>Haplorrhini</taxon>
        <taxon>Platyrrhini</taxon>
        <taxon>Atelidae</taxon>
        <taxon>Alouattinae</taxon>
        <taxon>Alouatta</taxon>
    </lineage>
</organism>
<comment type="function">
    <text evidence="1">Protamines substitute for histones in the chromatin of sperm during the haploid phase of spermatogenesis. They compact sperm DNA into a highly condensed, stable and inactive complex.</text>
</comment>
<comment type="subunit">
    <text evidence="1">Interacts with TDRP.</text>
</comment>
<comment type="subcellular location">
    <subcellularLocation>
        <location evidence="1">Nucleus</location>
    </subcellularLocation>
    <subcellularLocation>
        <location evidence="1">Chromosome</location>
    </subcellularLocation>
</comment>
<comment type="tissue specificity">
    <text>Testis.</text>
</comment>
<comment type="PTM">
    <text evidence="1">Proteolytic processing into mature chains is required for histone eviction during spermatogenesis. Transition proteins (TNP1 and TNP2) are required for processing.</text>
</comment>
<comment type="similarity">
    <text evidence="4">Belongs to the protamine P2 family.</text>
</comment>
<dbReference type="EMBL" id="X71335">
    <property type="protein sequence ID" value="CAA50475.1"/>
    <property type="molecule type" value="Genomic_DNA"/>
</dbReference>
<dbReference type="PIR" id="S33338">
    <property type="entry name" value="S33338"/>
</dbReference>
<dbReference type="GO" id="GO:0000786">
    <property type="term" value="C:nucleosome"/>
    <property type="evidence" value="ECO:0007669"/>
    <property type="project" value="UniProtKB-KW"/>
</dbReference>
<dbReference type="GO" id="GO:0005634">
    <property type="term" value="C:nucleus"/>
    <property type="evidence" value="ECO:0007669"/>
    <property type="project" value="UniProtKB-SubCell"/>
</dbReference>
<dbReference type="GO" id="GO:0003677">
    <property type="term" value="F:DNA binding"/>
    <property type="evidence" value="ECO:0007669"/>
    <property type="project" value="UniProtKB-KW"/>
</dbReference>
<dbReference type="GO" id="GO:0030261">
    <property type="term" value="P:chromosome condensation"/>
    <property type="evidence" value="ECO:0007669"/>
    <property type="project" value="UniProtKB-KW"/>
</dbReference>
<dbReference type="GO" id="GO:0006997">
    <property type="term" value="P:nucleus organization"/>
    <property type="evidence" value="ECO:0007669"/>
    <property type="project" value="TreeGrafter"/>
</dbReference>
<dbReference type="GO" id="GO:0007286">
    <property type="term" value="P:spermatid development"/>
    <property type="evidence" value="ECO:0007669"/>
    <property type="project" value="InterPro"/>
</dbReference>
<dbReference type="GO" id="GO:0007283">
    <property type="term" value="P:spermatogenesis"/>
    <property type="evidence" value="ECO:0000250"/>
    <property type="project" value="UniProtKB"/>
</dbReference>
<dbReference type="InterPro" id="IPR000492">
    <property type="entry name" value="PRM2"/>
</dbReference>
<dbReference type="PANTHER" id="PTHR21341">
    <property type="entry name" value="PROTAMINE-2"/>
    <property type="match status" value="1"/>
</dbReference>
<dbReference type="PANTHER" id="PTHR21341:SF2">
    <property type="entry name" value="PROTAMINE-2"/>
    <property type="match status" value="1"/>
</dbReference>
<dbReference type="Pfam" id="PF00841">
    <property type="entry name" value="Protamine_P2"/>
    <property type="match status" value="1"/>
</dbReference>
<evidence type="ECO:0000250" key="1">
    <source>
        <dbReference type="UniProtKB" id="P07978"/>
    </source>
</evidence>
<evidence type="ECO:0000250" key="2">
    <source>
        <dbReference type="UniProtKB" id="P11248"/>
    </source>
</evidence>
<evidence type="ECO:0000256" key="3">
    <source>
        <dbReference type="SAM" id="MobiDB-lite"/>
    </source>
</evidence>
<evidence type="ECO:0000305" key="4"/>
<reference key="1">
    <citation type="journal article" date="1993" name="Eur. J. Biochem.">
        <title>Evolution of pro-protamine P2 genes in primates.</title>
        <authorList>
            <person name="Retief J.D."/>
            <person name="Dixon G.H."/>
        </authorList>
    </citation>
    <scope>NUCLEOTIDE SEQUENCE [GENOMIC DNA]</scope>
</reference>
<reference key="2">
    <citation type="journal article" date="1993" name="Eur. J. Biochem.">
        <authorList>
            <person name="Retief J.D."/>
            <person name="Dixon G.H."/>
        </authorList>
    </citation>
    <scope>ERRATUM OF PUBMED:8513810</scope>
</reference>
<gene>
    <name type="primary">PRM2</name>
</gene>
<name>PRM2_ALOSE</name>
<proteinExistence type="evidence at transcript level"/>
<keyword id="KW-0158">Chromosome</keyword>
<keyword id="KW-0217">Developmental protein</keyword>
<keyword id="KW-0221">Differentiation</keyword>
<keyword id="KW-0226">DNA condensation</keyword>
<keyword id="KW-0238">DNA-binding</keyword>
<keyword id="KW-0544">Nucleosome core</keyword>
<keyword id="KW-0539">Nucleus</keyword>
<keyword id="KW-0597">Phosphoprotein</keyword>
<keyword id="KW-0744">Spermatogenesis</keyword>
<sequence length="100" mass="12560">MVRYHVRSPSERPHREYRQLVNGQEQGRHGQEEQGMSAEGVEGYGRTHQGCYGYRRRLCSRRRLYRVHRRQRRSCRRRCCRYRRRNRRGCRTRRRTCRRH</sequence>